<keyword id="KW-0002">3D-structure</keyword>
<keyword id="KW-0378">Hydrolase</keyword>
<keyword id="KW-0574">Periplasm</keyword>
<keyword id="KW-0645">Protease</keyword>
<keyword id="KW-1185">Reference proteome</keyword>
<keyword id="KW-0732">Signal</keyword>
<sequence>MKYPTWLRRIGGYLLAFAVGTAFGIANLPHAVAAADDLPPAPVITAQASVPLTSESFVAAAVSRSGPAVVRIDTETVVTRRTDPILDDPFFQEFFGRSFPVPPRERRIAGQGSGFIIDNSGIILTNAHVVDGASKVVVTLRDGRTFDGQVRGTDEVTDLAVVKIEPQGSALPVAPLGTSSNLQVGDWAIAVGNPVGLDNTVTLGIISTLGRSAAQAGIPDKRVEFIQTDAAINPGNSGGPLLNARGEVIGINTAIRADATGIGFAIPIDQAKAIQNTLAAGGTVPHPYIGVQMMNITVDQAQQNNRNPNSPFIIPEVDGILVMRVLPGTPAERAGIRRGDVIVAVDGTPISDGARLQRIVEQAGLNKALKLDLLRGDRRLSLTVQTAQLRNPTS</sequence>
<name>HHOA_SYNY3</name>
<comment type="function">
    <text evidence="3">A putative protease, its function overlaps that of the related putative proteases HhoB and HtrA.</text>
</comment>
<comment type="interaction">
    <interactant intactId="EBI-1610232">
        <id>P72780</id>
    </interactant>
    <interactant intactId="EBI-1610232">
        <id>P72780</id>
        <label>hhoA</label>
    </interactant>
    <organismsDiffer>false</organismsDiffer>
    <experiments>2</experiments>
</comment>
<comment type="subcellular location">
    <subcellularLocation>
        <location evidence="5">Periplasm</location>
    </subcellularLocation>
</comment>
<comment type="induction">
    <text evidence="4">Slight induction by UV-B light.</text>
</comment>
<comment type="disruption phenotype">
    <text evidence="3 4">No effect in a single knockout, but growth is inhibited at high light (120 umol photons/m(2)/s) or at elevated temperature in a triple protease knockout mutant (hhoA, hhoB and htrA). Triple mutants are not phototactic. No effect on the PSII repair cycle, even in the triple protease knockout strain.</text>
</comment>
<comment type="similarity">
    <text evidence="5">Belongs to the peptidase S1C family.</text>
</comment>
<dbReference type="EMBL" id="BA000022">
    <property type="protein sequence ID" value="BAA16795.1"/>
    <property type="molecule type" value="Genomic_DNA"/>
</dbReference>
<dbReference type="PIR" id="S74643">
    <property type="entry name" value="S74643"/>
</dbReference>
<dbReference type="PDB" id="5B6L">
    <property type="method" value="X-ray"/>
    <property type="resolution" value="2.80 A"/>
    <property type="chains" value="A=56-394"/>
</dbReference>
<dbReference type="PDB" id="5GND">
    <property type="method" value="X-ray"/>
    <property type="resolution" value="2.50 A"/>
    <property type="chains" value="A=56-394"/>
</dbReference>
<dbReference type="PDB" id="5T63">
    <property type="method" value="X-ray"/>
    <property type="resolution" value="2.50 A"/>
    <property type="chains" value="A=35-394"/>
</dbReference>
<dbReference type="PDB" id="5T69">
    <property type="method" value="X-ray"/>
    <property type="resolution" value="2.10 A"/>
    <property type="chains" value="A=35-394"/>
</dbReference>
<dbReference type="PDBsum" id="5B6L"/>
<dbReference type="PDBsum" id="5GND"/>
<dbReference type="PDBsum" id="5T63"/>
<dbReference type="PDBsum" id="5T69"/>
<dbReference type="SMR" id="P72780"/>
<dbReference type="FunCoup" id="P72780">
    <property type="interactions" value="440"/>
</dbReference>
<dbReference type="IntAct" id="P72780">
    <property type="interactions" value="13"/>
</dbReference>
<dbReference type="STRING" id="1148.gene:10497651"/>
<dbReference type="MEROPS" id="S01.482"/>
<dbReference type="PaxDb" id="1148-1651868"/>
<dbReference type="EnsemblBacteria" id="BAA16795">
    <property type="protein sequence ID" value="BAA16795"/>
    <property type="gene ID" value="BAA16795"/>
</dbReference>
<dbReference type="KEGG" id="syn:sll1679"/>
<dbReference type="eggNOG" id="COG0265">
    <property type="taxonomic scope" value="Bacteria"/>
</dbReference>
<dbReference type="InParanoid" id="P72780"/>
<dbReference type="PhylomeDB" id="P72780"/>
<dbReference type="BRENDA" id="3.4.21.107">
    <property type="organism ID" value="6192"/>
</dbReference>
<dbReference type="Proteomes" id="UP000001425">
    <property type="component" value="Chromosome"/>
</dbReference>
<dbReference type="GO" id="GO:0030288">
    <property type="term" value="C:outer membrane-bounded periplasmic space"/>
    <property type="evidence" value="ECO:0007005"/>
    <property type="project" value="UniProtKB"/>
</dbReference>
<dbReference type="GO" id="GO:0042802">
    <property type="term" value="F:identical protein binding"/>
    <property type="evidence" value="ECO:0000353"/>
    <property type="project" value="IntAct"/>
</dbReference>
<dbReference type="GO" id="GO:0004252">
    <property type="term" value="F:serine-type endopeptidase activity"/>
    <property type="evidence" value="ECO:0007669"/>
    <property type="project" value="InterPro"/>
</dbReference>
<dbReference type="GO" id="GO:0006508">
    <property type="term" value="P:proteolysis"/>
    <property type="evidence" value="ECO:0007669"/>
    <property type="project" value="UniProtKB-KW"/>
</dbReference>
<dbReference type="CDD" id="cd10838">
    <property type="entry name" value="cpPDZ_HhoA-like"/>
    <property type="match status" value="1"/>
</dbReference>
<dbReference type="Gene3D" id="2.30.42.10">
    <property type="match status" value="1"/>
</dbReference>
<dbReference type="Gene3D" id="2.40.10.120">
    <property type="match status" value="1"/>
</dbReference>
<dbReference type="InterPro" id="IPR048172">
    <property type="entry name" value="HhoA_HhoB_HtrA-like"/>
</dbReference>
<dbReference type="InterPro" id="IPR001478">
    <property type="entry name" value="PDZ"/>
</dbReference>
<dbReference type="InterPro" id="IPR036034">
    <property type="entry name" value="PDZ_sf"/>
</dbReference>
<dbReference type="InterPro" id="IPR009003">
    <property type="entry name" value="Peptidase_S1_PA"/>
</dbReference>
<dbReference type="InterPro" id="IPR001940">
    <property type="entry name" value="Peptidase_S1C"/>
</dbReference>
<dbReference type="NCBIfam" id="NF041521">
    <property type="entry name" value="HhoA_HhoB_HtrA"/>
    <property type="match status" value="1"/>
</dbReference>
<dbReference type="PANTHER" id="PTHR22939">
    <property type="entry name" value="SERINE PROTEASE FAMILY S1C HTRA-RELATED"/>
    <property type="match status" value="1"/>
</dbReference>
<dbReference type="PANTHER" id="PTHR22939:SF129">
    <property type="entry name" value="SERINE PROTEASE HTRA2, MITOCHONDRIAL"/>
    <property type="match status" value="1"/>
</dbReference>
<dbReference type="Pfam" id="PF13180">
    <property type="entry name" value="PDZ_2"/>
    <property type="match status" value="1"/>
</dbReference>
<dbReference type="Pfam" id="PF13365">
    <property type="entry name" value="Trypsin_2"/>
    <property type="match status" value="1"/>
</dbReference>
<dbReference type="PRINTS" id="PR00834">
    <property type="entry name" value="PROTEASES2C"/>
</dbReference>
<dbReference type="SMART" id="SM00228">
    <property type="entry name" value="PDZ"/>
    <property type="match status" value="1"/>
</dbReference>
<dbReference type="SUPFAM" id="SSF50156">
    <property type="entry name" value="PDZ domain-like"/>
    <property type="match status" value="1"/>
</dbReference>
<dbReference type="SUPFAM" id="SSF50494">
    <property type="entry name" value="Trypsin-like serine proteases"/>
    <property type="match status" value="1"/>
</dbReference>
<dbReference type="PROSITE" id="PS50106">
    <property type="entry name" value="PDZ"/>
    <property type="match status" value="1"/>
</dbReference>
<evidence type="ECO:0000255" key="1"/>
<evidence type="ECO:0000255" key="2">
    <source>
        <dbReference type="PROSITE-ProRule" id="PRU00143"/>
    </source>
</evidence>
<evidence type="ECO:0000269" key="3">
    <source>
    </source>
</evidence>
<evidence type="ECO:0000269" key="4">
    <source>
    </source>
</evidence>
<evidence type="ECO:0000305" key="5"/>
<evidence type="ECO:0007829" key="6">
    <source>
        <dbReference type="PDB" id="5T69"/>
    </source>
</evidence>
<gene>
    <name type="primary">hhoA</name>
    <name type="ordered locus">sll1679</name>
</gene>
<reference key="1">
    <citation type="journal article" date="1996" name="DNA Res.">
        <title>Sequence analysis of the genome of the unicellular cyanobacterium Synechocystis sp. strain PCC6803. II. Sequence determination of the entire genome and assignment of potential protein-coding regions.</title>
        <authorList>
            <person name="Kaneko T."/>
            <person name="Sato S."/>
            <person name="Kotani H."/>
            <person name="Tanaka A."/>
            <person name="Asamizu E."/>
            <person name="Nakamura Y."/>
            <person name="Miyajima N."/>
            <person name="Hirosawa M."/>
            <person name="Sugiura M."/>
            <person name="Sasamoto S."/>
            <person name="Kimura T."/>
            <person name="Hosouchi T."/>
            <person name="Matsuno A."/>
            <person name="Muraki A."/>
            <person name="Nakazaki N."/>
            <person name="Naruo K."/>
            <person name="Okumura S."/>
            <person name="Shimpo S."/>
            <person name="Takeuchi C."/>
            <person name="Wada T."/>
            <person name="Watanabe A."/>
            <person name="Yamada M."/>
            <person name="Yasuda M."/>
            <person name="Tabata S."/>
        </authorList>
    </citation>
    <scope>NUCLEOTIDE SEQUENCE [LARGE SCALE GENOMIC DNA]</scope>
    <source>
        <strain>ATCC 27184 / PCC 6803 / Kazusa</strain>
    </source>
</reference>
<reference key="2">
    <citation type="journal article" date="2000" name="Eur. J. Biochem.">
        <title>Proteomics of Synechocystis sp. strain PCC 6803. Identification of periplasmic proteins in cells grown at low and high salt concentrations.</title>
        <authorList>
            <person name="Fulda S."/>
            <person name="Huang F."/>
            <person name="Nilsson F."/>
            <person name="Hagemann M."/>
            <person name="Norling B."/>
        </authorList>
    </citation>
    <scope>SUBCELLULAR LOCATION</scope>
</reference>
<reference key="3">
    <citation type="journal article" date="2006" name="J. Biol. Chem.">
        <title>The deg proteases protect Synechocystis sp. PCC 6803 during heat and light stresses but are not essential for removal of damaged D1 protein during the photosystem two repair cycle.</title>
        <authorList>
            <person name="Barker M."/>
            <person name="de Vries R."/>
            <person name="Nield J."/>
            <person name="Komenda J."/>
            <person name="Nixon P.J."/>
        </authorList>
    </citation>
    <scope>FUNCTION IN PHOTOPROTECTION</scope>
    <scope>PROTECTION AGAINST HEAT STRESS</scope>
    <scope>DISRUPTION PHENOTYPE</scope>
</reference>
<reference key="4">
    <citation type="journal article" date="2007" name="Biochim. Biophys. Acta">
        <title>The role of the FtsH and Deg proteases in the repair of UV-B radiation-damaged Photosystem II in the cyanobacterium Synechocystis PCC 6803.</title>
        <authorList>
            <person name="Cheregi O."/>
            <person name="Sicora C."/>
            <person name="Kos P.B."/>
            <person name="Barker M."/>
            <person name="Nixon P.J."/>
            <person name="Vass I."/>
        </authorList>
    </citation>
    <scope>INDUCTION</scope>
    <scope>DISRUPTION PHENOTYPE</scope>
</reference>
<organism>
    <name type="scientific">Synechocystis sp. (strain ATCC 27184 / PCC 6803 / Kazusa)</name>
    <dbReference type="NCBI Taxonomy" id="1111708"/>
    <lineage>
        <taxon>Bacteria</taxon>
        <taxon>Bacillati</taxon>
        <taxon>Cyanobacteriota</taxon>
        <taxon>Cyanophyceae</taxon>
        <taxon>Synechococcales</taxon>
        <taxon>Merismopediaceae</taxon>
        <taxon>Synechocystis</taxon>
    </lineage>
</organism>
<feature type="signal peptide" evidence="1">
    <location>
        <begin position="1"/>
        <end position="24"/>
    </location>
</feature>
<feature type="chain" id="PRO_0000400424" description="Putative serine protease HhoA">
    <location>
        <begin position="25"/>
        <end position="394"/>
    </location>
</feature>
<feature type="domain" description="PDZ" evidence="2">
    <location>
        <begin position="293"/>
        <end position="377"/>
    </location>
</feature>
<feature type="helix" evidence="6">
    <location>
        <begin position="57"/>
        <end position="65"/>
    </location>
</feature>
<feature type="helix" evidence="6">
    <location>
        <begin position="66"/>
        <end position="68"/>
    </location>
</feature>
<feature type="strand" evidence="6">
    <location>
        <begin position="69"/>
        <end position="73"/>
    </location>
</feature>
<feature type="strand" evidence="6">
    <location>
        <begin position="112"/>
        <end position="118"/>
    </location>
</feature>
<feature type="turn" evidence="6">
    <location>
        <begin position="119"/>
        <end position="121"/>
    </location>
</feature>
<feature type="strand" evidence="6">
    <location>
        <begin position="122"/>
        <end position="125"/>
    </location>
</feature>
<feature type="helix" evidence="6">
    <location>
        <begin position="127"/>
        <end position="130"/>
    </location>
</feature>
<feature type="strand" evidence="6">
    <location>
        <begin position="134"/>
        <end position="139"/>
    </location>
</feature>
<feature type="strand" evidence="6">
    <location>
        <begin position="145"/>
        <end position="154"/>
    </location>
</feature>
<feature type="turn" evidence="6">
    <location>
        <begin position="155"/>
        <end position="158"/>
    </location>
</feature>
<feature type="strand" evidence="6">
    <location>
        <begin position="159"/>
        <end position="163"/>
    </location>
</feature>
<feature type="helix" evidence="6">
    <location>
        <begin position="179"/>
        <end position="181"/>
    </location>
</feature>
<feature type="strand" evidence="6">
    <location>
        <begin position="187"/>
        <end position="192"/>
    </location>
</feature>
<feature type="strand" evidence="6">
    <location>
        <begin position="194"/>
        <end position="198"/>
    </location>
</feature>
<feature type="strand" evidence="6">
    <location>
        <begin position="200"/>
        <end position="208"/>
    </location>
</feature>
<feature type="strand" evidence="6">
    <location>
        <begin position="226"/>
        <end position="228"/>
    </location>
</feature>
<feature type="turn" evidence="6">
    <location>
        <begin position="234"/>
        <end position="238"/>
    </location>
</feature>
<feature type="strand" evidence="6">
    <location>
        <begin position="239"/>
        <end position="242"/>
    </location>
</feature>
<feature type="strand" evidence="6">
    <location>
        <begin position="248"/>
        <end position="253"/>
    </location>
</feature>
<feature type="strand" evidence="6">
    <location>
        <begin position="263"/>
        <end position="267"/>
    </location>
</feature>
<feature type="helix" evidence="6">
    <location>
        <begin position="268"/>
        <end position="279"/>
    </location>
</feature>
<feature type="strand" evidence="6">
    <location>
        <begin position="291"/>
        <end position="296"/>
    </location>
</feature>
<feature type="helix" evidence="6">
    <location>
        <begin position="298"/>
        <end position="306"/>
    </location>
</feature>
<feature type="strand" evidence="6">
    <location>
        <begin position="310"/>
        <end position="312"/>
    </location>
</feature>
<feature type="strand" evidence="6">
    <location>
        <begin position="316"/>
        <end position="325"/>
    </location>
</feature>
<feature type="helix" evidence="6">
    <location>
        <begin position="330"/>
        <end position="333"/>
    </location>
</feature>
<feature type="strand" evidence="6">
    <location>
        <begin position="341"/>
        <end position="349"/>
    </location>
</feature>
<feature type="helix" evidence="6">
    <location>
        <begin position="353"/>
        <end position="363"/>
    </location>
</feature>
<feature type="strand" evidence="6">
    <location>
        <begin position="368"/>
        <end position="374"/>
    </location>
</feature>
<feature type="strand" evidence="6">
    <location>
        <begin position="379"/>
        <end position="385"/>
    </location>
</feature>
<protein>
    <recommendedName>
        <fullName>Putative serine protease HhoA</fullName>
    </recommendedName>
</protein>
<accession>P72780</accession>
<proteinExistence type="evidence at protein level"/>